<keyword id="KW-1003">Cell membrane</keyword>
<keyword id="KW-0472">Membrane</keyword>
<keyword id="KW-1185">Reference proteome</keyword>
<keyword id="KW-0812">Transmembrane</keyword>
<keyword id="KW-1133">Transmembrane helix</keyword>
<sequence>MEAADSATNNSKDTHFYGKSRAENRRRSDAMLLLFRALTFSFSLAAVVVMGTNRYRINPQLKVSWYDFEPYRYVLAVNAIICIYSFVETWLAVYTYLQGSYLLPEIFQVWFDYGHDQGFAYLLFSANSAGVAMAQLLQSGNTLIHGAYHCTEAGGYCTQARVSIALGFVAFLFLALSSLLTGLRVARWYLR</sequence>
<comment type="subunit">
    <text evidence="1">Homodimer and heterodimers.</text>
</comment>
<comment type="subcellular location">
    <subcellularLocation>
        <location evidence="1">Cell membrane</location>
        <topology evidence="1">Multi-pass membrane protein</topology>
    </subcellularLocation>
</comment>
<comment type="similarity">
    <text evidence="3">Belongs to the Casparian strip membrane proteins (CASP) family.</text>
</comment>
<reference key="1">
    <citation type="journal article" date="2008" name="Science">
        <title>The Physcomitrella genome reveals evolutionary insights into the conquest of land by plants.</title>
        <authorList>
            <person name="Rensing S.A."/>
            <person name="Lang D."/>
            <person name="Zimmer A.D."/>
            <person name="Terry A."/>
            <person name="Salamov A."/>
            <person name="Shapiro H."/>
            <person name="Nishiyama T."/>
            <person name="Perroud P.-F."/>
            <person name="Lindquist E.A."/>
            <person name="Kamisugi Y."/>
            <person name="Tanahashi T."/>
            <person name="Sakakibara K."/>
            <person name="Fujita T."/>
            <person name="Oishi K."/>
            <person name="Shin-I T."/>
            <person name="Kuroki Y."/>
            <person name="Toyoda A."/>
            <person name="Suzuki Y."/>
            <person name="Hashimoto S.-I."/>
            <person name="Yamaguchi K."/>
            <person name="Sugano S."/>
            <person name="Kohara Y."/>
            <person name="Fujiyama A."/>
            <person name="Anterola A."/>
            <person name="Aoki S."/>
            <person name="Ashton N."/>
            <person name="Barbazuk W.B."/>
            <person name="Barker E."/>
            <person name="Bennetzen J.L."/>
            <person name="Blankenship R."/>
            <person name="Cho S.H."/>
            <person name="Dutcher S.K."/>
            <person name="Estelle M."/>
            <person name="Fawcett J.A."/>
            <person name="Gundlach H."/>
            <person name="Hanada K."/>
            <person name="Heyl A."/>
            <person name="Hicks K.A."/>
            <person name="Hughes J."/>
            <person name="Lohr M."/>
            <person name="Mayer K."/>
            <person name="Melkozernov A."/>
            <person name="Murata T."/>
            <person name="Nelson D.R."/>
            <person name="Pils B."/>
            <person name="Prigge M."/>
            <person name="Reiss B."/>
            <person name="Renner T."/>
            <person name="Rombauts S."/>
            <person name="Rushton P.J."/>
            <person name="Sanderfoot A."/>
            <person name="Schween G."/>
            <person name="Shiu S.-H."/>
            <person name="Stueber K."/>
            <person name="Theodoulou F.L."/>
            <person name="Tu H."/>
            <person name="Van de Peer Y."/>
            <person name="Verrier P.J."/>
            <person name="Waters E."/>
            <person name="Wood A."/>
            <person name="Yang L."/>
            <person name="Cove D."/>
            <person name="Cuming A.C."/>
            <person name="Hasebe M."/>
            <person name="Lucas S."/>
            <person name="Mishler B.D."/>
            <person name="Reski R."/>
            <person name="Grigoriev I.V."/>
            <person name="Quatrano R.S."/>
            <person name="Boore J.L."/>
        </authorList>
    </citation>
    <scope>NUCLEOTIDE SEQUENCE [LARGE SCALE GENOMIC DNA]</scope>
    <source>
        <strain>cv. Gransden 2004</strain>
    </source>
</reference>
<reference key="2">
    <citation type="journal article" date="2014" name="Plant Physiol.">
        <title>Functional and evolutionary analysis of the CASPARIAN STRIP MEMBRANE DOMAIN PROTEIN family.</title>
        <authorList>
            <person name="Roppolo D."/>
            <person name="Boeckmann B."/>
            <person name="Pfister A."/>
            <person name="Boutet E."/>
            <person name="Rubio M.C."/>
            <person name="Denervaud-Tendon V."/>
            <person name="Vermeer J.E."/>
            <person name="Gheyselinck J."/>
            <person name="Xenarios I."/>
            <person name="Geldner N."/>
        </authorList>
    </citation>
    <scope>GENE FAMILY</scope>
    <scope>NOMENCLATURE</scope>
</reference>
<gene>
    <name type="ORF">PHYPADRAFT_182225</name>
</gene>
<evidence type="ECO:0000250" key="1"/>
<evidence type="ECO:0000255" key="2"/>
<evidence type="ECO:0000305" key="3"/>
<dbReference type="EMBL" id="DS544944">
    <property type="protein sequence ID" value="EDQ72608.1"/>
    <property type="molecule type" value="Genomic_DNA"/>
</dbReference>
<dbReference type="RefSeq" id="XP_001762485.1">
    <property type="nucleotide sequence ID" value="XM_001762433.1"/>
</dbReference>
<dbReference type="FunCoup" id="A9S848">
    <property type="interactions" value="415"/>
</dbReference>
<dbReference type="PaxDb" id="3218-PP1S55_157V6.1"/>
<dbReference type="EnsemblPlants" id="Pp3c3_30480V3.1">
    <property type="protein sequence ID" value="Pp3c3_30480V3.1"/>
    <property type="gene ID" value="Pp3c3_30480"/>
</dbReference>
<dbReference type="EnsemblPlants" id="Pp3c3_30480V3.2">
    <property type="protein sequence ID" value="Pp3c3_30480V3.2"/>
    <property type="gene ID" value="Pp3c3_30480"/>
</dbReference>
<dbReference type="Gramene" id="Pp3c3_30480V3.1">
    <property type="protein sequence ID" value="Pp3c3_30480V3.1"/>
    <property type="gene ID" value="Pp3c3_30480"/>
</dbReference>
<dbReference type="Gramene" id="Pp3c3_30480V3.2">
    <property type="protein sequence ID" value="Pp3c3_30480V3.2"/>
    <property type="gene ID" value="Pp3c3_30480"/>
</dbReference>
<dbReference type="eggNOG" id="ENOG502QQ76">
    <property type="taxonomic scope" value="Eukaryota"/>
</dbReference>
<dbReference type="HOGENOM" id="CLU_1484566_0_0_1"/>
<dbReference type="InParanoid" id="A9S848"/>
<dbReference type="OMA" id="IFRFAAF"/>
<dbReference type="OrthoDB" id="1907587at2759"/>
<dbReference type="Proteomes" id="UP000006727">
    <property type="component" value="Chromosome 3"/>
</dbReference>
<dbReference type="GO" id="GO:0005886">
    <property type="term" value="C:plasma membrane"/>
    <property type="evidence" value="ECO:0007669"/>
    <property type="project" value="UniProtKB-SubCell"/>
</dbReference>
<dbReference type="InterPro" id="IPR006459">
    <property type="entry name" value="CASP/CASPL"/>
</dbReference>
<dbReference type="InterPro" id="IPR006702">
    <property type="entry name" value="CASP_dom"/>
</dbReference>
<dbReference type="NCBIfam" id="TIGR01569">
    <property type="entry name" value="A_tha_TIGR01569"/>
    <property type="match status" value="1"/>
</dbReference>
<dbReference type="PANTHER" id="PTHR33573">
    <property type="entry name" value="CASP-LIKE PROTEIN 4A4"/>
    <property type="match status" value="1"/>
</dbReference>
<dbReference type="PANTHER" id="PTHR33573:SF56">
    <property type="entry name" value="CASP-LIKE PROTEIN 4C1"/>
    <property type="match status" value="1"/>
</dbReference>
<dbReference type="Pfam" id="PF04535">
    <property type="entry name" value="CASP_dom"/>
    <property type="match status" value="1"/>
</dbReference>
<accession>A9S848</accession>
<protein>
    <recommendedName>
        <fullName>CASP-like protein 4C2</fullName>
        <shortName>PpCASPL4C2</shortName>
    </recommendedName>
</protein>
<feature type="chain" id="PRO_0000391529" description="CASP-like protein 4C2">
    <location>
        <begin position="1"/>
        <end position="191"/>
    </location>
</feature>
<feature type="topological domain" description="Cytoplasmic" evidence="2">
    <location>
        <begin position="1"/>
        <end position="29"/>
    </location>
</feature>
<feature type="transmembrane region" description="Helical" evidence="2">
    <location>
        <begin position="30"/>
        <end position="50"/>
    </location>
</feature>
<feature type="topological domain" description="Extracellular" evidence="2">
    <location>
        <begin position="51"/>
        <end position="72"/>
    </location>
</feature>
<feature type="transmembrane region" description="Helical" evidence="2">
    <location>
        <begin position="73"/>
        <end position="93"/>
    </location>
</feature>
<feature type="topological domain" description="Cytoplasmic" evidence="2">
    <location>
        <begin position="94"/>
        <end position="116"/>
    </location>
</feature>
<feature type="transmembrane region" description="Helical" evidence="2">
    <location>
        <begin position="117"/>
        <end position="137"/>
    </location>
</feature>
<feature type="topological domain" description="Extracellular" evidence="2">
    <location>
        <begin position="138"/>
        <end position="161"/>
    </location>
</feature>
<feature type="transmembrane region" description="Helical" evidence="2">
    <location>
        <begin position="162"/>
        <end position="182"/>
    </location>
</feature>
<feature type="topological domain" description="Cytoplasmic" evidence="2">
    <location>
        <begin position="183"/>
        <end position="191"/>
    </location>
</feature>
<proteinExistence type="evidence at transcript level"/>
<organism>
    <name type="scientific">Physcomitrium patens</name>
    <name type="common">Spreading-leaved earth moss</name>
    <name type="synonym">Physcomitrella patens</name>
    <dbReference type="NCBI Taxonomy" id="3218"/>
    <lineage>
        <taxon>Eukaryota</taxon>
        <taxon>Viridiplantae</taxon>
        <taxon>Streptophyta</taxon>
        <taxon>Embryophyta</taxon>
        <taxon>Bryophyta</taxon>
        <taxon>Bryophytina</taxon>
        <taxon>Bryopsida</taxon>
        <taxon>Funariidae</taxon>
        <taxon>Funariales</taxon>
        <taxon>Funariaceae</taxon>
        <taxon>Physcomitrium</taxon>
    </lineage>
</organism>
<name>CSPL7_PHYPA</name>